<proteinExistence type="inferred from homology"/>
<sequence>MREERPIIALDFPSFEEVKSFLSLFPADERLYVKIGMELYYAEGPDIVRYVKSLGHSVFLDLKLHDIPNTVKSTMAVLSRLGIDMTTVQAAGGVEMLRAAREGLGQGPILIAVTQLTSTSEEQMREDQNIQSTLLASVLHYAKRTAQAKLDGVVCSAHEVKAIKSEVPAGFVCLTPGIRPTGADIGDQKRVMTPHQARAIGSDYIVLGRPITQATDPVKAYHQIKAEWNR</sequence>
<reference key="1">
    <citation type="journal article" date="2008" name="PLoS ONE">
        <title>Genome sequence of a lancefield group C Streptococcus zooepidemicus strain causing epidemic nephritis: new information about an old disease.</title>
        <authorList>
            <person name="Beres S.B."/>
            <person name="Sesso R."/>
            <person name="Pinto S.W.L."/>
            <person name="Hoe N.P."/>
            <person name="Porcella S.F."/>
            <person name="Deleo F.R."/>
            <person name="Musser J.M."/>
        </authorList>
    </citation>
    <scope>NUCLEOTIDE SEQUENCE [LARGE SCALE GENOMIC DNA]</scope>
    <source>
        <strain>MGCS10565</strain>
    </source>
</reference>
<gene>
    <name evidence="1" type="primary">pyrF</name>
    <name type="ordered locus">Sez_1159</name>
</gene>
<feature type="chain" id="PRO_1000138559" description="Orotidine 5'-phosphate decarboxylase">
    <location>
        <begin position="1"/>
        <end position="230"/>
    </location>
</feature>
<feature type="active site" description="Proton donor" evidence="1">
    <location>
        <position position="63"/>
    </location>
</feature>
<feature type="binding site" evidence="1">
    <location>
        <position position="11"/>
    </location>
    <ligand>
        <name>substrate</name>
    </ligand>
</feature>
<feature type="binding site" evidence="1">
    <location>
        <position position="34"/>
    </location>
    <ligand>
        <name>substrate</name>
    </ligand>
</feature>
<feature type="binding site" evidence="1">
    <location>
        <begin position="61"/>
        <end position="70"/>
    </location>
    <ligand>
        <name>substrate</name>
    </ligand>
</feature>
<feature type="binding site" evidence="1">
    <location>
        <position position="117"/>
    </location>
    <ligand>
        <name>substrate</name>
    </ligand>
</feature>
<feature type="binding site" evidence="1">
    <location>
        <position position="179"/>
    </location>
    <ligand>
        <name>substrate</name>
    </ligand>
</feature>
<feature type="binding site" evidence="1">
    <location>
        <position position="188"/>
    </location>
    <ligand>
        <name>substrate</name>
    </ligand>
</feature>
<feature type="binding site" evidence="1">
    <location>
        <position position="208"/>
    </location>
    <ligand>
        <name>substrate</name>
    </ligand>
</feature>
<feature type="binding site" evidence="1">
    <location>
        <position position="209"/>
    </location>
    <ligand>
        <name>substrate</name>
    </ligand>
</feature>
<keyword id="KW-0210">Decarboxylase</keyword>
<keyword id="KW-0456">Lyase</keyword>
<keyword id="KW-0665">Pyrimidine biosynthesis</keyword>
<protein>
    <recommendedName>
        <fullName evidence="1">Orotidine 5'-phosphate decarboxylase</fullName>
        <ecNumber evidence="1">4.1.1.23</ecNumber>
    </recommendedName>
    <alternativeName>
        <fullName evidence="1">OMP decarboxylase</fullName>
        <shortName evidence="1">OMPDCase</shortName>
        <shortName evidence="1">OMPdecase</shortName>
    </alternativeName>
</protein>
<organism>
    <name type="scientific">Streptococcus equi subsp. zooepidemicus (strain MGCS10565)</name>
    <dbReference type="NCBI Taxonomy" id="552526"/>
    <lineage>
        <taxon>Bacteria</taxon>
        <taxon>Bacillati</taxon>
        <taxon>Bacillota</taxon>
        <taxon>Bacilli</taxon>
        <taxon>Lactobacillales</taxon>
        <taxon>Streptococcaceae</taxon>
        <taxon>Streptococcus</taxon>
    </lineage>
</organism>
<dbReference type="EC" id="4.1.1.23" evidence="1"/>
<dbReference type="EMBL" id="CP001129">
    <property type="protein sequence ID" value="ACG62508.1"/>
    <property type="molecule type" value="Genomic_DNA"/>
</dbReference>
<dbReference type="RefSeq" id="WP_012515773.1">
    <property type="nucleotide sequence ID" value="NC_011134.1"/>
</dbReference>
<dbReference type="SMR" id="B4U3E1"/>
<dbReference type="KEGG" id="sez:Sez_1159"/>
<dbReference type="HOGENOM" id="CLU_067069_1_1_9"/>
<dbReference type="UniPathway" id="UPA00070">
    <property type="reaction ID" value="UER00120"/>
</dbReference>
<dbReference type="Proteomes" id="UP000001873">
    <property type="component" value="Chromosome"/>
</dbReference>
<dbReference type="GO" id="GO:0005829">
    <property type="term" value="C:cytosol"/>
    <property type="evidence" value="ECO:0007669"/>
    <property type="project" value="TreeGrafter"/>
</dbReference>
<dbReference type="GO" id="GO:0004590">
    <property type="term" value="F:orotidine-5'-phosphate decarboxylase activity"/>
    <property type="evidence" value="ECO:0007669"/>
    <property type="project" value="UniProtKB-UniRule"/>
</dbReference>
<dbReference type="GO" id="GO:0006207">
    <property type="term" value="P:'de novo' pyrimidine nucleobase biosynthetic process"/>
    <property type="evidence" value="ECO:0007669"/>
    <property type="project" value="InterPro"/>
</dbReference>
<dbReference type="GO" id="GO:0044205">
    <property type="term" value="P:'de novo' UMP biosynthetic process"/>
    <property type="evidence" value="ECO:0007669"/>
    <property type="project" value="UniProtKB-UniRule"/>
</dbReference>
<dbReference type="CDD" id="cd04725">
    <property type="entry name" value="OMP_decarboxylase_like"/>
    <property type="match status" value="1"/>
</dbReference>
<dbReference type="FunFam" id="3.20.20.70:FF:000015">
    <property type="entry name" value="Orotidine 5'-phosphate decarboxylase"/>
    <property type="match status" value="1"/>
</dbReference>
<dbReference type="Gene3D" id="3.20.20.70">
    <property type="entry name" value="Aldolase class I"/>
    <property type="match status" value="1"/>
</dbReference>
<dbReference type="HAMAP" id="MF_01200_B">
    <property type="entry name" value="OMPdecase_type1_B"/>
    <property type="match status" value="1"/>
</dbReference>
<dbReference type="InterPro" id="IPR013785">
    <property type="entry name" value="Aldolase_TIM"/>
</dbReference>
<dbReference type="InterPro" id="IPR014732">
    <property type="entry name" value="OMPdecase"/>
</dbReference>
<dbReference type="InterPro" id="IPR018089">
    <property type="entry name" value="OMPdecase_AS"/>
</dbReference>
<dbReference type="InterPro" id="IPR047596">
    <property type="entry name" value="OMPdecase_bac"/>
</dbReference>
<dbReference type="InterPro" id="IPR001754">
    <property type="entry name" value="OMPdeCOase_dom"/>
</dbReference>
<dbReference type="InterPro" id="IPR011060">
    <property type="entry name" value="RibuloseP-bd_barrel"/>
</dbReference>
<dbReference type="NCBIfam" id="NF001273">
    <property type="entry name" value="PRK00230.1"/>
    <property type="match status" value="1"/>
</dbReference>
<dbReference type="NCBIfam" id="TIGR01740">
    <property type="entry name" value="pyrF"/>
    <property type="match status" value="1"/>
</dbReference>
<dbReference type="PANTHER" id="PTHR32119">
    <property type="entry name" value="OROTIDINE 5'-PHOSPHATE DECARBOXYLASE"/>
    <property type="match status" value="1"/>
</dbReference>
<dbReference type="PANTHER" id="PTHR32119:SF2">
    <property type="entry name" value="OROTIDINE 5'-PHOSPHATE DECARBOXYLASE"/>
    <property type="match status" value="1"/>
</dbReference>
<dbReference type="Pfam" id="PF00215">
    <property type="entry name" value="OMPdecase"/>
    <property type="match status" value="1"/>
</dbReference>
<dbReference type="SMART" id="SM00934">
    <property type="entry name" value="OMPdecase"/>
    <property type="match status" value="1"/>
</dbReference>
<dbReference type="SUPFAM" id="SSF51366">
    <property type="entry name" value="Ribulose-phoshate binding barrel"/>
    <property type="match status" value="1"/>
</dbReference>
<dbReference type="PROSITE" id="PS00156">
    <property type="entry name" value="OMPDECASE"/>
    <property type="match status" value="1"/>
</dbReference>
<evidence type="ECO:0000255" key="1">
    <source>
        <dbReference type="HAMAP-Rule" id="MF_01200"/>
    </source>
</evidence>
<accession>B4U3E1</accession>
<comment type="function">
    <text evidence="1">Catalyzes the decarboxylation of orotidine 5'-monophosphate (OMP) to uridine 5'-monophosphate (UMP).</text>
</comment>
<comment type="catalytic activity">
    <reaction evidence="1">
        <text>orotidine 5'-phosphate + H(+) = UMP + CO2</text>
        <dbReference type="Rhea" id="RHEA:11596"/>
        <dbReference type="ChEBI" id="CHEBI:15378"/>
        <dbReference type="ChEBI" id="CHEBI:16526"/>
        <dbReference type="ChEBI" id="CHEBI:57538"/>
        <dbReference type="ChEBI" id="CHEBI:57865"/>
        <dbReference type="EC" id="4.1.1.23"/>
    </reaction>
</comment>
<comment type="pathway">
    <text evidence="1">Pyrimidine metabolism; UMP biosynthesis via de novo pathway; UMP from orotate: step 2/2.</text>
</comment>
<comment type="subunit">
    <text evidence="1">Homodimer.</text>
</comment>
<comment type="similarity">
    <text evidence="1">Belongs to the OMP decarboxylase family. Type 1 subfamily.</text>
</comment>
<name>PYRF_STREM</name>